<proteinExistence type="inferred from homology"/>
<dbReference type="EC" id="2.7.11.1"/>
<dbReference type="EMBL" id="AAFI02000024">
    <property type="protein sequence ID" value="EAS66888.1"/>
    <property type="molecule type" value="Genomic_DNA"/>
</dbReference>
<dbReference type="RefSeq" id="XP_001134572.1">
    <property type="nucleotide sequence ID" value="XM_001134572.1"/>
</dbReference>
<dbReference type="SMR" id="Q1ZXI5"/>
<dbReference type="FunCoup" id="Q1ZXI5">
    <property type="interactions" value="243"/>
</dbReference>
<dbReference type="STRING" id="44689.Q1ZXI5"/>
<dbReference type="PaxDb" id="44689-DDB0231558"/>
<dbReference type="EnsemblProtists" id="EAS66888">
    <property type="protein sequence ID" value="EAS66888"/>
    <property type="gene ID" value="DDB_G0278845"/>
</dbReference>
<dbReference type="GeneID" id="8621734"/>
<dbReference type="KEGG" id="ddi:DDB_G0278845"/>
<dbReference type="dictyBase" id="DDB_G0278845"/>
<dbReference type="VEuPathDB" id="AmoebaDB:DDB_G0278845"/>
<dbReference type="eggNOG" id="KOG0605">
    <property type="taxonomic scope" value="Eukaryota"/>
</dbReference>
<dbReference type="HOGENOM" id="CLU_257764_0_0_1"/>
<dbReference type="InParanoid" id="Q1ZXI5"/>
<dbReference type="OMA" id="IDYLQIN"/>
<dbReference type="PRO" id="PR:Q1ZXI5"/>
<dbReference type="Proteomes" id="UP000002195">
    <property type="component" value="Chromosome 3"/>
</dbReference>
<dbReference type="GO" id="GO:0005815">
    <property type="term" value="C:microtubule organizing center"/>
    <property type="evidence" value="ECO:0007669"/>
    <property type="project" value="UniProtKB-ARBA"/>
</dbReference>
<dbReference type="GO" id="GO:0005524">
    <property type="term" value="F:ATP binding"/>
    <property type="evidence" value="ECO:0007669"/>
    <property type="project" value="UniProtKB-KW"/>
</dbReference>
<dbReference type="GO" id="GO:0106310">
    <property type="term" value="F:protein serine kinase activity"/>
    <property type="evidence" value="ECO:0007669"/>
    <property type="project" value="RHEA"/>
</dbReference>
<dbReference type="GO" id="GO:0004674">
    <property type="term" value="F:protein serine/threonine kinase activity"/>
    <property type="evidence" value="ECO:0000318"/>
    <property type="project" value="GO_Central"/>
</dbReference>
<dbReference type="GO" id="GO:0035556">
    <property type="term" value="P:intracellular signal transduction"/>
    <property type="evidence" value="ECO:0000318"/>
    <property type="project" value="GO_Central"/>
</dbReference>
<dbReference type="FunFam" id="3.30.200.20:FF:001854">
    <property type="entry name" value="Probable serine/threonine-protein kinase DDB_G0278845"/>
    <property type="match status" value="1"/>
</dbReference>
<dbReference type="Gene3D" id="3.30.200.20">
    <property type="entry name" value="Phosphorylase Kinase, domain 1"/>
    <property type="match status" value="2"/>
</dbReference>
<dbReference type="Gene3D" id="1.10.510.10">
    <property type="entry name" value="Transferase(Phosphotransferase) domain 1"/>
    <property type="match status" value="2"/>
</dbReference>
<dbReference type="InterPro" id="IPR000961">
    <property type="entry name" value="AGC-kinase_C"/>
</dbReference>
<dbReference type="InterPro" id="IPR011009">
    <property type="entry name" value="Kinase-like_dom_sf"/>
</dbReference>
<dbReference type="InterPro" id="IPR000719">
    <property type="entry name" value="Prot_kinase_dom"/>
</dbReference>
<dbReference type="InterPro" id="IPR017441">
    <property type="entry name" value="Protein_kinase_ATP_BS"/>
</dbReference>
<dbReference type="InterPro" id="IPR008271">
    <property type="entry name" value="Ser/Thr_kinase_AS"/>
</dbReference>
<dbReference type="InterPro" id="IPR050236">
    <property type="entry name" value="Ser_Thr_kinase_AGC"/>
</dbReference>
<dbReference type="PANTHER" id="PTHR24356:SF417">
    <property type="entry name" value="CELL CYCLE PROTEIN KINASE DBF2-RELATED"/>
    <property type="match status" value="1"/>
</dbReference>
<dbReference type="PANTHER" id="PTHR24356">
    <property type="entry name" value="SERINE/THREONINE-PROTEIN KINASE"/>
    <property type="match status" value="1"/>
</dbReference>
<dbReference type="Pfam" id="PF00069">
    <property type="entry name" value="Pkinase"/>
    <property type="match status" value="2"/>
</dbReference>
<dbReference type="SMART" id="SM00220">
    <property type="entry name" value="S_TKc"/>
    <property type="match status" value="1"/>
</dbReference>
<dbReference type="SUPFAM" id="SSF56112">
    <property type="entry name" value="Protein kinase-like (PK-like)"/>
    <property type="match status" value="1"/>
</dbReference>
<dbReference type="PROSITE" id="PS51285">
    <property type="entry name" value="AGC_KINASE_CTER"/>
    <property type="match status" value="1"/>
</dbReference>
<dbReference type="PROSITE" id="PS00107">
    <property type="entry name" value="PROTEIN_KINASE_ATP"/>
    <property type="match status" value="1"/>
</dbReference>
<dbReference type="PROSITE" id="PS50011">
    <property type="entry name" value="PROTEIN_KINASE_DOM"/>
    <property type="match status" value="1"/>
</dbReference>
<dbReference type="PROSITE" id="PS00108">
    <property type="entry name" value="PROTEIN_KINASE_ST"/>
    <property type="match status" value="1"/>
</dbReference>
<reference key="1">
    <citation type="journal article" date="2005" name="Nature">
        <title>The genome of the social amoeba Dictyostelium discoideum.</title>
        <authorList>
            <person name="Eichinger L."/>
            <person name="Pachebat J.A."/>
            <person name="Gloeckner G."/>
            <person name="Rajandream M.A."/>
            <person name="Sucgang R."/>
            <person name="Berriman M."/>
            <person name="Song J."/>
            <person name="Olsen R."/>
            <person name="Szafranski K."/>
            <person name="Xu Q."/>
            <person name="Tunggal B."/>
            <person name="Kummerfeld S."/>
            <person name="Madera M."/>
            <person name="Konfortov B.A."/>
            <person name="Rivero F."/>
            <person name="Bankier A.T."/>
            <person name="Lehmann R."/>
            <person name="Hamlin N."/>
            <person name="Davies R."/>
            <person name="Gaudet P."/>
            <person name="Fey P."/>
            <person name="Pilcher K."/>
            <person name="Chen G."/>
            <person name="Saunders D."/>
            <person name="Sodergren E.J."/>
            <person name="Davis P."/>
            <person name="Kerhornou A."/>
            <person name="Nie X."/>
            <person name="Hall N."/>
            <person name="Anjard C."/>
            <person name="Hemphill L."/>
            <person name="Bason N."/>
            <person name="Farbrother P."/>
            <person name="Desany B."/>
            <person name="Just E."/>
            <person name="Morio T."/>
            <person name="Rost R."/>
            <person name="Churcher C.M."/>
            <person name="Cooper J."/>
            <person name="Haydock S."/>
            <person name="van Driessche N."/>
            <person name="Cronin A."/>
            <person name="Goodhead I."/>
            <person name="Muzny D.M."/>
            <person name="Mourier T."/>
            <person name="Pain A."/>
            <person name="Lu M."/>
            <person name="Harper D."/>
            <person name="Lindsay R."/>
            <person name="Hauser H."/>
            <person name="James K.D."/>
            <person name="Quiles M."/>
            <person name="Madan Babu M."/>
            <person name="Saito T."/>
            <person name="Buchrieser C."/>
            <person name="Wardroper A."/>
            <person name="Felder M."/>
            <person name="Thangavelu M."/>
            <person name="Johnson D."/>
            <person name="Knights A."/>
            <person name="Loulseged H."/>
            <person name="Mungall K.L."/>
            <person name="Oliver K."/>
            <person name="Price C."/>
            <person name="Quail M.A."/>
            <person name="Urushihara H."/>
            <person name="Hernandez J."/>
            <person name="Rabbinowitsch E."/>
            <person name="Steffen D."/>
            <person name="Sanders M."/>
            <person name="Ma J."/>
            <person name="Kohara Y."/>
            <person name="Sharp S."/>
            <person name="Simmonds M.N."/>
            <person name="Spiegler S."/>
            <person name="Tivey A."/>
            <person name="Sugano S."/>
            <person name="White B."/>
            <person name="Walker D."/>
            <person name="Woodward J.R."/>
            <person name="Winckler T."/>
            <person name="Tanaka Y."/>
            <person name="Shaulsky G."/>
            <person name="Schleicher M."/>
            <person name="Weinstock G.M."/>
            <person name="Rosenthal A."/>
            <person name="Cox E.C."/>
            <person name="Chisholm R.L."/>
            <person name="Gibbs R.A."/>
            <person name="Loomis W.F."/>
            <person name="Platzer M."/>
            <person name="Kay R.R."/>
            <person name="Williams J.G."/>
            <person name="Dear P.H."/>
            <person name="Noegel A.A."/>
            <person name="Barrell B.G."/>
            <person name="Kuspa A."/>
        </authorList>
    </citation>
    <scope>NUCLEOTIDE SEQUENCE [LARGE SCALE GENOMIC DNA]</scope>
    <source>
        <strain>AX4</strain>
    </source>
</reference>
<feature type="chain" id="PRO_0000358901" description="Probable serine/threonine-protein kinase DDB_G0278845">
    <location>
        <begin position="1"/>
        <end position="1350"/>
    </location>
</feature>
<feature type="domain" description="Protein kinase" evidence="1">
    <location>
        <begin position="756"/>
        <end position="1082"/>
    </location>
</feature>
<feature type="domain" description="AGC-kinase C-terminal" evidence="2">
    <location>
        <begin position="1083"/>
        <end position="1203"/>
    </location>
</feature>
<feature type="region of interest" description="Disordered" evidence="4">
    <location>
        <begin position="66"/>
        <end position="109"/>
    </location>
</feature>
<feature type="region of interest" description="Disordered" evidence="4">
    <location>
        <begin position="121"/>
        <end position="159"/>
    </location>
</feature>
<feature type="region of interest" description="Disordered" evidence="4">
    <location>
        <begin position="179"/>
        <end position="249"/>
    </location>
</feature>
<feature type="region of interest" description="Disordered" evidence="4">
    <location>
        <begin position="270"/>
        <end position="296"/>
    </location>
</feature>
<feature type="region of interest" description="Disordered" evidence="4">
    <location>
        <begin position="337"/>
        <end position="396"/>
    </location>
</feature>
<feature type="region of interest" description="Disordered" evidence="4">
    <location>
        <begin position="431"/>
        <end position="506"/>
    </location>
</feature>
<feature type="region of interest" description="Disordered" evidence="4">
    <location>
        <begin position="525"/>
        <end position="596"/>
    </location>
</feature>
<feature type="region of interest" description="Disordered" evidence="4">
    <location>
        <begin position="612"/>
        <end position="701"/>
    </location>
</feature>
<feature type="region of interest" description="Disordered" evidence="4">
    <location>
        <begin position="1129"/>
        <end position="1159"/>
    </location>
</feature>
<feature type="region of interest" description="Disordered" evidence="4">
    <location>
        <begin position="1190"/>
        <end position="1219"/>
    </location>
</feature>
<feature type="region of interest" description="Disordered" evidence="4">
    <location>
        <begin position="1232"/>
        <end position="1285"/>
    </location>
</feature>
<feature type="region of interest" description="Disordered" evidence="4">
    <location>
        <begin position="1300"/>
        <end position="1350"/>
    </location>
</feature>
<feature type="compositionally biased region" description="Polar residues" evidence="4">
    <location>
        <begin position="84"/>
        <end position="98"/>
    </location>
</feature>
<feature type="compositionally biased region" description="Low complexity" evidence="4">
    <location>
        <begin position="127"/>
        <end position="140"/>
    </location>
</feature>
<feature type="compositionally biased region" description="Low complexity" evidence="4">
    <location>
        <begin position="181"/>
        <end position="210"/>
    </location>
</feature>
<feature type="compositionally biased region" description="Polar residues" evidence="4">
    <location>
        <begin position="211"/>
        <end position="222"/>
    </location>
</feature>
<feature type="compositionally biased region" description="Low complexity" evidence="4">
    <location>
        <begin position="223"/>
        <end position="235"/>
    </location>
</feature>
<feature type="compositionally biased region" description="Acidic residues" evidence="4">
    <location>
        <begin position="236"/>
        <end position="246"/>
    </location>
</feature>
<feature type="compositionally biased region" description="Low complexity" evidence="4">
    <location>
        <begin position="270"/>
        <end position="293"/>
    </location>
</feature>
<feature type="compositionally biased region" description="Low complexity" evidence="4">
    <location>
        <begin position="337"/>
        <end position="391"/>
    </location>
</feature>
<feature type="compositionally biased region" description="Polar residues" evidence="4">
    <location>
        <begin position="431"/>
        <end position="443"/>
    </location>
</feature>
<feature type="compositionally biased region" description="Acidic residues" evidence="4">
    <location>
        <begin position="454"/>
        <end position="482"/>
    </location>
</feature>
<feature type="compositionally biased region" description="Low complexity" evidence="4">
    <location>
        <begin position="483"/>
        <end position="495"/>
    </location>
</feature>
<feature type="compositionally biased region" description="Low complexity" evidence="4">
    <location>
        <begin position="525"/>
        <end position="551"/>
    </location>
</feature>
<feature type="compositionally biased region" description="Polar residues" evidence="4">
    <location>
        <begin position="565"/>
        <end position="592"/>
    </location>
</feature>
<feature type="compositionally biased region" description="Low complexity" evidence="4">
    <location>
        <begin position="612"/>
        <end position="637"/>
    </location>
</feature>
<feature type="compositionally biased region" description="Low complexity" evidence="4">
    <location>
        <begin position="645"/>
        <end position="679"/>
    </location>
</feature>
<feature type="compositionally biased region" description="Low complexity" evidence="4">
    <location>
        <begin position="690"/>
        <end position="701"/>
    </location>
</feature>
<feature type="compositionally biased region" description="Pro residues" evidence="4">
    <location>
        <begin position="1131"/>
        <end position="1142"/>
    </location>
</feature>
<feature type="compositionally biased region" description="Low complexity" evidence="4">
    <location>
        <begin position="1204"/>
        <end position="1219"/>
    </location>
</feature>
<feature type="compositionally biased region" description="Low complexity" evidence="4">
    <location>
        <begin position="1232"/>
        <end position="1283"/>
    </location>
</feature>
<feature type="compositionally biased region" description="Low complexity" evidence="4">
    <location>
        <begin position="1300"/>
        <end position="1313"/>
    </location>
</feature>
<feature type="compositionally biased region" description="Polar residues" evidence="4">
    <location>
        <begin position="1314"/>
        <end position="1330"/>
    </location>
</feature>
<feature type="compositionally biased region" description="Polar residues" evidence="4">
    <location>
        <begin position="1338"/>
        <end position="1350"/>
    </location>
</feature>
<feature type="active site" description="Proton acceptor" evidence="1 3">
    <location>
        <position position="880"/>
    </location>
</feature>
<feature type="binding site" evidence="1">
    <location>
        <begin position="762"/>
        <end position="770"/>
    </location>
    <ligand>
        <name>ATP</name>
        <dbReference type="ChEBI" id="CHEBI:30616"/>
    </ligand>
</feature>
<feature type="binding site" evidence="1">
    <location>
        <position position="785"/>
    </location>
    <ligand>
        <name>ATP</name>
        <dbReference type="ChEBI" id="CHEBI:30616"/>
    </ligand>
</feature>
<name>Y1558_DICDI</name>
<gene>
    <name type="ORF">DDB_G0278845</name>
</gene>
<evidence type="ECO:0000255" key="1">
    <source>
        <dbReference type="PROSITE-ProRule" id="PRU00159"/>
    </source>
</evidence>
<evidence type="ECO:0000255" key="2">
    <source>
        <dbReference type="PROSITE-ProRule" id="PRU00618"/>
    </source>
</evidence>
<evidence type="ECO:0000255" key="3">
    <source>
        <dbReference type="PROSITE-ProRule" id="PRU10027"/>
    </source>
</evidence>
<evidence type="ECO:0000256" key="4">
    <source>
        <dbReference type="SAM" id="MobiDB-lite"/>
    </source>
</evidence>
<evidence type="ECO:0000305" key="5"/>
<protein>
    <recommendedName>
        <fullName>Probable serine/threonine-protein kinase DDB_G0278845</fullName>
        <ecNumber>2.7.11.1</ecNumber>
    </recommendedName>
</protein>
<comment type="catalytic activity">
    <reaction>
        <text>L-seryl-[protein] + ATP = O-phospho-L-seryl-[protein] + ADP + H(+)</text>
        <dbReference type="Rhea" id="RHEA:17989"/>
        <dbReference type="Rhea" id="RHEA-COMP:9863"/>
        <dbReference type="Rhea" id="RHEA-COMP:11604"/>
        <dbReference type="ChEBI" id="CHEBI:15378"/>
        <dbReference type="ChEBI" id="CHEBI:29999"/>
        <dbReference type="ChEBI" id="CHEBI:30616"/>
        <dbReference type="ChEBI" id="CHEBI:83421"/>
        <dbReference type="ChEBI" id="CHEBI:456216"/>
        <dbReference type="EC" id="2.7.11.1"/>
    </reaction>
</comment>
<comment type="catalytic activity">
    <reaction>
        <text>L-threonyl-[protein] + ATP = O-phospho-L-threonyl-[protein] + ADP + H(+)</text>
        <dbReference type="Rhea" id="RHEA:46608"/>
        <dbReference type="Rhea" id="RHEA-COMP:11060"/>
        <dbReference type="Rhea" id="RHEA-COMP:11605"/>
        <dbReference type="ChEBI" id="CHEBI:15378"/>
        <dbReference type="ChEBI" id="CHEBI:30013"/>
        <dbReference type="ChEBI" id="CHEBI:30616"/>
        <dbReference type="ChEBI" id="CHEBI:61977"/>
        <dbReference type="ChEBI" id="CHEBI:456216"/>
        <dbReference type="EC" id="2.7.11.1"/>
    </reaction>
</comment>
<comment type="similarity">
    <text evidence="5">Belongs to the protein kinase superfamily. AGC Ser/Thr protein kinase family.</text>
</comment>
<sequence length="1350" mass="150420">MVFSLKESSDSISKPSSLKNSTIIENPEILNNNNNNNNSNNIIKSPNFLLSQKQRSINISNEQTQRELNNNGGNLDHRDPNSPKYLTSSHSSVVIPQDNSNNNNNNNIRISTSPILTEISENGLLESPTSPIRTSSTPTTPTSPPFITSPPFITSPKGLNSPRRLVGFFSKSTSYQSLLANNNNNNNNSNNSNNNSNSSNSNISCSNNSNKISRLINNSNTTDSNASIRSSNNNNDDFDNNDDEDLNSINNSSGIGIGVSSDYSLMGSSSSINGNTTTTTTNTYSYNDNDNVNEYSPKGKRLIRHEKSKSSPPLSPITPYYENLVIKGNYTNSNNYNNYNNYYYNNNSSGNNNNNNNNNNNNNNNNNNNNNNNNNNNNNNNNISGNSGYNNSRDDLFKRPFEMNKESSPTNSLIPNVSALKLNRVIKSSNGSTIFTSTSSDIASENDNNKNNENENENENENENENENENDNDSDSENENENDNSIGNKSNKSNSELSIEEQEKKKEKDLENYINMINNSGFITNDSNNNNNNNNSGNNNSFISNGSPFSPIKEESPQPSPTFSPKPTLQRQRSNSKNVLYSPNASPSNSCKIPTPPLLHNISIIDTSNNNNNNSNNIENQNNNNNNIDNNIDNNIDSIDKKLKNNNNNNNNNNNNNNNNNNNNNNNNNNNNNNNNNNNNDDDDDDNNIKKTPNNKINTNENPMIITNSVLKRSGNIDYLQINNNYVIPSPSPGTQLSECTNQQMKYNPPVSIVDFTLIEKIGEGGFGQVFLAKKKDTGEIVAIKRMSKELIWSKNKVSHIKNERDILAQGKNHRWIVSLVYSFQDDQYLYLAMEYVPGGDLRSLLSALNSLDEDSARFYMAEMVEAVDSCHRLGYCHRDLKPENFLISRDGHVKLADFGLSKNVVTRYHLRSASADNTINTTTSTPTTSSNINQLSSSMIEHTPMKFGAAANGNGPLNSSVTDFGSFKDLSVAARLAYSVVGSPFYMAPEVLQATRGYGDEVDWWSLGCMFYEFIFGVPPFDGDSPEEVMETVLKWKTMLQRPDGVSDELWDLISGLINDGSTRLGSGEKGVENIKNHIFFNGVPWGKLHDLDPPFVPLLQGDYDTTYFENTEKLDNNFLLQQTQQLSLLPPPLPPPPQTPTQPQQPSLPPQTPNDKMIFDKIRSPVVYTNTHSGNIITSRSRPRNILGFTYPRADDQPLLWNNNNNNNNNNNNNNNNLLKNFEELTILNNNNNKNKNKGNSNNNNNNNNNNNNNNNNNNNNNNNNNNNNNSNNNKNNSNNKTVTIPISTGRLLNEIDNCNNNNNNDENNINTGNLTPPNSSPFNSGENLNFEKQEPTSPYGSYSKQQQ</sequence>
<keyword id="KW-0067">ATP-binding</keyword>
<keyword id="KW-0418">Kinase</keyword>
<keyword id="KW-0547">Nucleotide-binding</keyword>
<keyword id="KW-0597">Phosphoprotein</keyword>
<keyword id="KW-1185">Reference proteome</keyword>
<keyword id="KW-0723">Serine/threonine-protein kinase</keyword>
<keyword id="KW-0808">Transferase</keyword>
<organism>
    <name type="scientific">Dictyostelium discoideum</name>
    <name type="common">Social amoeba</name>
    <dbReference type="NCBI Taxonomy" id="44689"/>
    <lineage>
        <taxon>Eukaryota</taxon>
        <taxon>Amoebozoa</taxon>
        <taxon>Evosea</taxon>
        <taxon>Eumycetozoa</taxon>
        <taxon>Dictyostelia</taxon>
        <taxon>Dictyosteliales</taxon>
        <taxon>Dictyosteliaceae</taxon>
        <taxon>Dictyostelium</taxon>
    </lineage>
</organism>
<accession>Q1ZXI5</accession>